<feature type="chain" id="PRO_1000085258" description="Chaperone protein DnaJ">
    <location>
        <begin position="1"/>
        <end position="378"/>
    </location>
</feature>
<feature type="domain" description="J" evidence="1">
    <location>
        <begin position="5"/>
        <end position="70"/>
    </location>
</feature>
<feature type="repeat" description="CXXCXGXG motif">
    <location>
        <begin position="150"/>
        <end position="157"/>
    </location>
</feature>
<feature type="repeat" description="CXXCXGXG motif">
    <location>
        <begin position="167"/>
        <end position="174"/>
    </location>
</feature>
<feature type="repeat" description="CXXCXGXG motif">
    <location>
        <begin position="189"/>
        <end position="196"/>
    </location>
</feature>
<feature type="repeat" description="CXXCXGXG motif">
    <location>
        <begin position="203"/>
        <end position="210"/>
    </location>
</feature>
<feature type="zinc finger region" description="CR-type" evidence="1">
    <location>
        <begin position="137"/>
        <end position="215"/>
    </location>
</feature>
<feature type="binding site" evidence="1">
    <location>
        <position position="150"/>
    </location>
    <ligand>
        <name>Zn(2+)</name>
        <dbReference type="ChEBI" id="CHEBI:29105"/>
        <label>1</label>
    </ligand>
</feature>
<feature type="binding site" evidence="1">
    <location>
        <position position="153"/>
    </location>
    <ligand>
        <name>Zn(2+)</name>
        <dbReference type="ChEBI" id="CHEBI:29105"/>
        <label>1</label>
    </ligand>
</feature>
<feature type="binding site" evidence="1">
    <location>
        <position position="167"/>
    </location>
    <ligand>
        <name>Zn(2+)</name>
        <dbReference type="ChEBI" id="CHEBI:29105"/>
        <label>2</label>
    </ligand>
</feature>
<feature type="binding site" evidence="1">
    <location>
        <position position="170"/>
    </location>
    <ligand>
        <name>Zn(2+)</name>
        <dbReference type="ChEBI" id="CHEBI:29105"/>
        <label>2</label>
    </ligand>
</feature>
<feature type="binding site" evidence="1">
    <location>
        <position position="189"/>
    </location>
    <ligand>
        <name>Zn(2+)</name>
        <dbReference type="ChEBI" id="CHEBI:29105"/>
        <label>2</label>
    </ligand>
</feature>
<feature type="binding site" evidence="1">
    <location>
        <position position="192"/>
    </location>
    <ligand>
        <name>Zn(2+)</name>
        <dbReference type="ChEBI" id="CHEBI:29105"/>
        <label>2</label>
    </ligand>
</feature>
<feature type="binding site" evidence="1">
    <location>
        <position position="203"/>
    </location>
    <ligand>
        <name>Zn(2+)</name>
        <dbReference type="ChEBI" id="CHEBI:29105"/>
        <label>1</label>
    </ligand>
</feature>
<feature type="binding site" evidence="1">
    <location>
        <position position="206"/>
    </location>
    <ligand>
        <name>Zn(2+)</name>
        <dbReference type="ChEBI" id="CHEBI:29105"/>
        <label>1</label>
    </ligand>
</feature>
<evidence type="ECO:0000255" key="1">
    <source>
        <dbReference type="HAMAP-Rule" id="MF_01152"/>
    </source>
</evidence>
<name>DNAJ_PSYCK</name>
<comment type="function">
    <text evidence="1">Participates actively in the response to hyperosmotic and heat shock by preventing the aggregation of stress-denatured proteins and by disaggregating proteins, also in an autonomous, DnaK-independent fashion. Unfolded proteins bind initially to DnaJ; upon interaction with the DnaJ-bound protein, DnaK hydrolyzes its bound ATP, resulting in the formation of a stable complex. GrpE releases ADP from DnaK; ATP binding to DnaK triggers the release of the substrate protein, thus completing the reaction cycle. Several rounds of ATP-dependent interactions between DnaJ, DnaK and GrpE are required for fully efficient folding. Also involved, together with DnaK and GrpE, in the DNA replication of plasmids through activation of initiation proteins.</text>
</comment>
<comment type="cofactor">
    <cofactor evidence="1">
        <name>Zn(2+)</name>
        <dbReference type="ChEBI" id="CHEBI:29105"/>
    </cofactor>
    <text evidence="1">Binds 2 Zn(2+) ions per monomer.</text>
</comment>
<comment type="subunit">
    <text evidence="1">Homodimer.</text>
</comment>
<comment type="subcellular location">
    <subcellularLocation>
        <location evidence="1">Cytoplasm</location>
    </subcellularLocation>
</comment>
<comment type="domain">
    <text evidence="1">The J domain is necessary and sufficient to stimulate DnaK ATPase activity. Zinc center 1 plays an important role in the autonomous, DnaK-independent chaperone activity of DnaJ. Zinc center 2 is essential for interaction with DnaK and for DnaJ activity.</text>
</comment>
<comment type="similarity">
    <text evidence="1">Belongs to the DnaJ family.</text>
</comment>
<proteinExistence type="inferred from homology"/>
<accession>Q1QET5</accession>
<gene>
    <name evidence="1" type="primary">dnaJ</name>
    <name type="ordered locus">Pcryo_0034</name>
</gene>
<organism>
    <name type="scientific">Psychrobacter cryohalolentis (strain ATCC BAA-1226 / DSM 17306 / VKM B-2378 / K5)</name>
    <dbReference type="NCBI Taxonomy" id="335284"/>
    <lineage>
        <taxon>Bacteria</taxon>
        <taxon>Pseudomonadati</taxon>
        <taxon>Pseudomonadota</taxon>
        <taxon>Gammaproteobacteria</taxon>
        <taxon>Moraxellales</taxon>
        <taxon>Moraxellaceae</taxon>
        <taxon>Psychrobacter</taxon>
    </lineage>
</organism>
<reference key="1">
    <citation type="submission" date="2006-03" db="EMBL/GenBank/DDBJ databases">
        <title>Complete sequence of chromosome of Psychrobacter cryohalolentis K5.</title>
        <authorList>
            <consortium name="US DOE Joint Genome Institute"/>
            <person name="Copeland A."/>
            <person name="Lucas S."/>
            <person name="Lapidus A."/>
            <person name="Barry K."/>
            <person name="Detter J.C."/>
            <person name="Glavina T."/>
            <person name="Hammon N."/>
            <person name="Israni S."/>
            <person name="Dalin E."/>
            <person name="Tice H."/>
            <person name="Pitluck S."/>
            <person name="Brettin T."/>
            <person name="Bruce D."/>
            <person name="Han C."/>
            <person name="Tapia R."/>
            <person name="Sims D.R."/>
            <person name="Gilna P."/>
            <person name="Schmutz J."/>
            <person name="Larimer F."/>
            <person name="Land M."/>
            <person name="Hauser L."/>
            <person name="Kyrpides N."/>
            <person name="Kim E."/>
            <person name="Richardson P."/>
        </authorList>
    </citation>
    <scope>NUCLEOTIDE SEQUENCE [LARGE SCALE GENOMIC DNA]</scope>
    <source>
        <strain>ATCC BAA-1226 / DSM 17306 / VKM B-2378 / K5</strain>
    </source>
</reference>
<dbReference type="EMBL" id="CP000323">
    <property type="protein sequence ID" value="ABE73818.1"/>
    <property type="molecule type" value="Genomic_DNA"/>
</dbReference>
<dbReference type="RefSeq" id="WP_011512410.1">
    <property type="nucleotide sequence ID" value="NC_007969.1"/>
</dbReference>
<dbReference type="SMR" id="Q1QET5"/>
<dbReference type="STRING" id="335284.Pcryo_0034"/>
<dbReference type="KEGG" id="pcr:Pcryo_0034"/>
<dbReference type="eggNOG" id="COG0484">
    <property type="taxonomic scope" value="Bacteria"/>
</dbReference>
<dbReference type="HOGENOM" id="CLU_017633_0_7_6"/>
<dbReference type="Proteomes" id="UP000002425">
    <property type="component" value="Chromosome"/>
</dbReference>
<dbReference type="GO" id="GO:0005737">
    <property type="term" value="C:cytoplasm"/>
    <property type="evidence" value="ECO:0007669"/>
    <property type="project" value="UniProtKB-SubCell"/>
</dbReference>
<dbReference type="GO" id="GO:0005524">
    <property type="term" value="F:ATP binding"/>
    <property type="evidence" value="ECO:0007669"/>
    <property type="project" value="InterPro"/>
</dbReference>
<dbReference type="GO" id="GO:0031072">
    <property type="term" value="F:heat shock protein binding"/>
    <property type="evidence" value="ECO:0007669"/>
    <property type="project" value="InterPro"/>
</dbReference>
<dbReference type="GO" id="GO:0051082">
    <property type="term" value="F:unfolded protein binding"/>
    <property type="evidence" value="ECO:0007669"/>
    <property type="project" value="UniProtKB-UniRule"/>
</dbReference>
<dbReference type="GO" id="GO:0008270">
    <property type="term" value="F:zinc ion binding"/>
    <property type="evidence" value="ECO:0007669"/>
    <property type="project" value="UniProtKB-UniRule"/>
</dbReference>
<dbReference type="GO" id="GO:0051085">
    <property type="term" value="P:chaperone cofactor-dependent protein refolding"/>
    <property type="evidence" value="ECO:0007669"/>
    <property type="project" value="TreeGrafter"/>
</dbReference>
<dbReference type="GO" id="GO:0006260">
    <property type="term" value="P:DNA replication"/>
    <property type="evidence" value="ECO:0007669"/>
    <property type="project" value="UniProtKB-KW"/>
</dbReference>
<dbReference type="GO" id="GO:0042026">
    <property type="term" value="P:protein refolding"/>
    <property type="evidence" value="ECO:0007669"/>
    <property type="project" value="TreeGrafter"/>
</dbReference>
<dbReference type="GO" id="GO:0009408">
    <property type="term" value="P:response to heat"/>
    <property type="evidence" value="ECO:0007669"/>
    <property type="project" value="InterPro"/>
</dbReference>
<dbReference type="CDD" id="cd06257">
    <property type="entry name" value="DnaJ"/>
    <property type="match status" value="1"/>
</dbReference>
<dbReference type="CDD" id="cd10747">
    <property type="entry name" value="DnaJ_C"/>
    <property type="match status" value="1"/>
</dbReference>
<dbReference type="CDD" id="cd10719">
    <property type="entry name" value="DnaJ_zf"/>
    <property type="match status" value="1"/>
</dbReference>
<dbReference type="FunFam" id="1.10.287.110:FF:000034">
    <property type="entry name" value="Chaperone protein DnaJ"/>
    <property type="match status" value="1"/>
</dbReference>
<dbReference type="FunFam" id="2.10.230.10:FF:000002">
    <property type="entry name" value="Molecular chaperone DnaJ"/>
    <property type="match status" value="1"/>
</dbReference>
<dbReference type="FunFam" id="2.60.260.20:FF:000004">
    <property type="entry name" value="Molecular chaperone DnaJ"/>
    <property type="match status" value="1"/>
</dbReference>
<dbReference type="Gene3D" id="1.10.287.110">
    <property type="entry name" value="DnaJ domain"/>
    <property type="match status" value="1"/>
</dbReference>
<dbReference type="Gene3D" id="2.10.230.10">
    <property type="entry name" value="Heat shock protein DnaJ, cysteine-rich domain"/>
    <property type="match status" value="1"/>
</dbReference>
<dbReference type="Gene3D" id="2.60.260.20">
    <property type="entry name" value="Urease metallochaperone UreE, N-terminal domain"/>
    <property type="match status" value="2"/>
</dbReference>
<dbReference type="HAMAP" id="MF_01152">
    <property type="entry name" value="DnaJ"/>
    <property type="match status" value="1"/>
</dbReference>
<dbReference type="InterPro" id="IPR012724">
    <property type="entry name" value="DnaJ"/>
</dbReference>
<dbReference type="InterPro" id="IPR002939">
    <property type="entry name" value="DnaJ_C"/>
</dbReference>
<dbReference type="InterPro" id="IPR001623">
    <property type="entry name" value="DnaJ_domain"/>
</dbReference>
<dbReference type="InterPro" id="IPR008971">
    <property type="entry name" value="HSP40/DnaJ_pept-bd"/>
</dbReference>
<dbReference type="InterPro" id="IPR001305">
    <property type="entry name" value="HSP_DnaJ_Cys-rich_dom"/>
</dbReference>
<dbReference type="InterPro" id="IPR036410">
    <property type="entry name" value="HSP_DnaJ_Cys-rich_dom_sf"/>
</dbReference>
<dbReference type="InterPro" id="IPR036869">
    <property type="entry name" value="J_dom_sf"/>
</dbReference>
<dbReference type="NCBIfam" id="TIGR02349">
    <property type="entry name" value="DnaJ_bact"/>
    <property type="match status" value="1"/>
</dbReference>
<dbReference type="NCBIfam" id="NF008035">
    <property type="entry name" value="PRK10767.1"/>
    <property type="match status" value="1"/>
</dbReference>
<dbReference type="PANTHER" id="PTHR43096:SF48">
    <property type="entry name" value="CHAPERONE PROTEIN DNAJ"/>
    <property type="match status" value="1"/>
</dbReference>
<dbReference type="PANTHER" id="PTHR43096">
    <property type="entry name" value="DNAJ HOMOLOG 1, MITOCHONDRIAL-RELATED"/>
    <property type="match status" value="1"/>
</dbReference>
<dbReference type="Pfam" id="PF00226">
    <property type="entry name" value="DnaJ"/>
    <property type="match status" value="1"/>
</dbReference>
<dbReference type="Pfam" id="PF01556">
    <property type="entry name" value="DnaJ_C"/>
    <property type="match status" value="1"/>
</dbReference>
<dbReference type="Pfam" id="PF00684">
    <property type="entry name" value="DnaJ_CXXCXGXG"/>
    <property type="match status" value="1"/>
</dbReference>
<dbReference type="PRINTS" id="PR00625">
    <property type="entry name" value="JDOMAIN"/>
</dbReference>
<dbReference type="SMART" id="SM00271">
    <property type="entry name" value="DnaJ"/>
    <property type="match status" value="1"/>
</dbReference>
<dbReference type="SUPFAM" id="SSF46565">
    <property type="entry name" value="Chaperone J-domain"/>
    <property type="match status" value="1"/>
</dbReference>
<dbReference type="SUPFAM" id="SSF57938">
    <property type="entry name" value="DnaJ/Hsp40 cysteine-rich domain"/>
    <property type="match status" value="1"/>
</dbReference>
<dbReference type="SUPFAM" id="SSF49493">
    <property type="entry name" value="HSP40/DnaJ peptide-binding domain"/>
    <property type="match status" value="2"/>
</dbReference>
<dbReference type="PROSITE" id="PS50076">
    <property type="entry name" value="DNAJ_2"/>
    <property type="match status" value="1"/>
</dbReference>
<dbReference type="PROSITE" id="PS51188">
    <property type="entry name" value="ZF_CR"/>
    <property type="match status" value="1"/>
</dbReference>
<sequence>MSKRDFYEILGVSKTADNKEIKRAYRKLAMKYHPDRNSEDPDAEEKFKEASMAYEVLSSEEKRSAYDRMGHAAFENGMGGGGFGGGGGGNFQDIFGDIFGNFGDIFGQSRGGGGGRSRRGSDLRYVIELTLEEAVRGCKKEISFTAPAPCDTCDGKGAKNASDIVTCQTCHGQGQVRMQQGFFAVQQACPHCGGTGKQIKNPCSDCHGNGVKDKSRTLEVSIPAGVDDGDRVRLAGEGEAGGAGVQNGDLYVEVRVKQHNVFTRQGADLYMDVPVSITDAALGKEVEIPTLDGKVKIKVAEGTQSGKLLRVRGRGVTPVRTTMKGDLICRVVIETPVNLTREQKDLLRQFQDTLDGDSKHQQSPHKKSFFKKIGDLFD</sequence>
<keyword id="KW-0143">Chaperone</keyword>
<keyword id="KW-0963">Cytoplasm</keyword>
<keyword id="KW-0235">DNA replication</keyword>
<keyword id="KW-0479">Metal-binding</keyword>
<keyword id="KW-0677">Repeat</keyword>
<keyword id="KW-0346">Stress response</keyword>
<keyword id="KW-0862">Zinc</keyword>
<keyword id="KW-0863">Zinc-finger</keyword>
<protein>
    <recommendedName>
        <fullName evidence="1">Chaperone protein DnaJ</fullName>
    </recommendedName>
</protein>